<protein>
    <recommendedName>
        <fullName evidence="3">Probable toxin TacT</fullName>
    </recommendedName>
</protein>
<keyword id="KW-0012">Acyltransferase</keyword>
<keyword id="KW-0614">Plasmid</keyword>
<keyword id="KW-1185">Reference proteome</keyword>
<keyword id="KW-1277">Toxin-antitoxin system</keyword>
<keyword id="KW-0808">Transferase</keyword>
<name>TACT_SINFN</name>
<proteinExistence type="inferred from homology"/>
<dbReference type="EMBL" id="U00090">
    <property type="protein sequence ID" value="AAB91616.1"/>
    <property type="molecule type" value="Genomic_DNA"/>
</dbReference>
<dbReference type="RefSeq" id="NP_443778.1">
    <property type="nucleotide sequence ID" value="NC_000914.2"/>
</dbReference>
<dbReference type="RefSeq" id="WP_010875071.1">
    <property type="nucleotide sequence ID" value="NC_000914.2"/>
</dbReference>
<dbReference type="SMR" id="P55366"/>
<dbReference type="KEGG" id="rhi:NGR_a00290"/>
<dbReference type="PATRIC" id="fig|394.7.peg.27"/>
<dbReference type="eggNOG" id="COG3153">
    <property type="taxonomic scope" value="Bacteria"/>
</dbReference>
<dbReference type="HOGENOM" id="CLU_101288_3_0_5"/>
<dbReference type="OrthoDB" id="9793394at2"/>
<dbReference type="Proteomes" id="UP000001054">
    <property type="component" value="Plasmid pNGR234a"/>
</dbReference>
<dbReference type="GO" id="GO:0016746">
    <property type="term" value="F:acyltransferase activity"/>
    <property type="evidence" value="ECO:0007669"/>
    <property type="project" value="UniProtKB-KW"/>
</dbReference>
<dbReference type="Gene3D" id="3.40.630.30">
    <property type="match status" value="1"/>
</dbReference>
<dbReference type="InterPro" id="IPR016181">
    <property type="entry name" value="Acyl_CoA_acyltransferase"/>
</dbReference>
<dbReference type="PANTHER" id="PTHR36449:SF1">
    <property type="entry name" value="ACETYLTRANSFERASE"/>
    <property type="match status" value="1"/>
</dbReference>
<dbReference type="PANTHER" id="PTHR36449">
    <property type="entry name" value="ACETYLTRANSFERASE-RELATED"/>
    <property type="match status" value="1"/>
</dbReference>
<dbReference type="SUPFAM" id="SSF55729">
    <property type="entry name" value="Acyl-CoA N-acyltransferases (Nat)"/>
    <property type="match status" value="1"/>
</dbReference>
<feature type="chain" id="PRO_0000200803" description="Probable toxin TacT">
    <location>
        <begin position="1"/>
        <end position="181"/>
    </location>
</feature>
<gene>
    <name evidence="3" type="primary">tacT</name>
    <name type="ordered locus">NGR_a00290</name>
    <name evidence="2" type="ORF">y4aS</name>
</gene>
<geneLocation type="plasmid">
    <name>sym pNGR234a</name>
</geneLocation>
<reference key="1">
    <citation type="journal article" date="1997" name="Nature">
        <title>Molecular basis of symbiosis between Rhizobium and legumes.</title>
        <authorList>
            <person name="Freiberg C.A."/>
            <person name="Fellay R."/>
            <person name="Bairoch A."/>
            <person name="Broughton W.J."/>
            <person name="Rosenthal A."/>
            <person name="Perret X."/>
        </authorList>
    </citation>
    <scope>NUCLEOTIDE SEQUENCE [LARGE SCALE GENOMIC DNA]</scope>
    <source>
        <strain>NBRC 101917 / NGR234</strain>
    </source>
</reference>
<reference key="2">
    <citation type="journal article" date="2009" name="Appl. Environ. Microbiol.">
        <title>Rhizobium sp. strain NGR234 possesses a remarkable number of secretion systems.</title>
        <authorList>
            <person name="Schmeisser C."/>
            <person name="Liesegang H."/>
            <person name="Krysciak D."/>
            <person name="Bakkou N."/>
            <person name="Le Quere A."/>
            <person name="Wollherr A."/>
            <person name="Heinemeyer I."/>
            <person name="Morgenstern B."/>
            <person name="Pommerening-Roeser A."/>
            <person name="Flores M."/>
            <person name="Palacios R."/>
            <person name="Brenner S."/>
            <person name="Gottschalk G."/>
            <person name="Schmitz R.A."/>
            <person name="Broughton W.J."/>
            <person name="Perret X."/>
            <person name="Strittmatter A.W."/>
            <person name="Streit W.R."/>
        </authorList>
    </citation>
    <scope>NUCLEOTIDE SEQUENCE [LARGE SCALE GENOMIC DNA]</scope>
    <source>
        <strain>NBRC 101917 / NGR234</strain>
    </source>
</reference>
<evidence type="ECO:0000250" key="1">
    <source>
        <dbReference type="UniProtKB" id="A0A0F6B8D8"/>
    </source>
</evidence>
<evidence type="ECO:0000303" key="2">
    <source>
    </source>
</evidence>
<evidence type="ECO:0000305" key="3"/>
<organism>
    <name type="scientific">Sinorhizobium fredii (strain NBRC 101917 / NGR234)</name>
    <dbReference type="NCBI Taxonomy" id="394"/>
    <lineage>
        <taxon>Bacteria</taxon>
        <taxon>Pseudomonadati</taxon>
        <taxon>Pseudomonadota</taxon>
        <taxon>Alphaproteobacteria</taxon>
        <taxon>Hyphomicrobiales</taxon>
        <taxon>Rhizobiaceae</taxon>
        <taxon>Sinorhizobium/Ensifer group</taxon>
        <taxon>Sinorhizobium</taxon>
    </lineage>
</organism>
<comment type="function">
    <text evidence="1">Probable toxin component of a type II toxin-antitoxin (TA) system. Might acetylate tRNA and inhibit translation. Should be neutralized by cognate antitoxin TacA (y4aR).</text>
</comment>
<comment type="subunit">
    <text evidence="1">Forms a complex with cognate antitoxin TacA.</text>
</comment>
<comment type="similarity">
    <text evidence="3">Belongs to the acetyltransferase family.</text>
</comment>
<sequence>MANTGAAKRIIEPLDPNRHDRAAFFCGIIQVDNFFKKTANKLSKADNLRVYVMTEDDGTTVIGFYAINSHSISYADLPERFSRTRPGHGSIPAAYISMIGRDQRYRGGGYGGDLLTDCLQRIAGIADQIGIAVVLLDVLVCGDEEKTSRRVALYSEYGFQPLPSMPLRMFLPIATIRSLMG</sequence>
<accession>P55366</accession>